<gene>
    <name evidence="1" type="primary">rps16</name>
</gene>
<comment type="subcellular location">
    <subcellularLocation>
        <location>Plastid</location>
        <location>Chloroplast</location>
    </subcellularLocation>
</comment>
<comment type="similarity">
    <text evidence="1">Belongs to the bacterial ribosomal protein bS16 family.</text>
</comment>
<feature type="chain" id="PRO_0000276939" description="Small ribosomal subunit protein bS16c">
    <location>
        <begin position="1"/>
        <end position="78"/>
    </location>
</feature>
<organism>
    <name type="scientific">Chara vulgaris</name>
    <name type="common">Common stonewort</name>
    <dbReference type="NCBI Taxonomy" id="55564"/>
    <lineage>
        <taxon>Eukaryota</taxon>
        <taxon>Viridiplantae</taxon>
        <taxon>Streptophyta</taxon>
        <taxon>Charophyceae</taxon>
        <taxon>Charales</taxon>
        <taxon>Characeae</taxon>
        <taxon>Chara</taxon>
    </lineage>
</organism>
<evidence type="ECO:0000255" key="1">
    <source>
        <dbReference type="HAMAP-Rule" id="MF_00385"/>
    </source>
</evidence>
<evidence type="ECO:0000305" key="2"/>
<keyword id="KW-0150">Chloroplast</keyword>
<keyword id="KW-0934">Plastid</keyword>
<keyword id="KW-0687">Ribonucleoprotein</keyword>
<keyword id="KW-0689">Ribosomal protein</keyword>
<dbReference type="EMBL" id="DQ229107">
    <property type="protein sequence ID" value="ABA61973.1"/>
    <property type="molecule type" value="Genomic_DNA"/>
</dbReference>
<dbReference type="RefSeq" id="YP_635736.1">
    <property type="nucleotide sequence ID" value="NC_008097.1"/>
</dbReference>
<dbReference type="SMR" id="Q1ACL1"/>
<dbReference type="GeneID" id="4100196"/>
<dbReference type="GO" id="GO:0009507">
    <property type="term" value="C:chloroplast"/>
    <property type="evidence" value="ECO:0007669"/>
    <property type="project" value="UniProtKB-SubCell"/>
</dbReference>
<dbReference type="GO" id="GO:0005739">
    <property type="term" value="C:mitochondrion"/>
    <property type="evidence" value="ECO:0007669"/>
    <property type="project" value="GOC"/>
</dbReference>
<dbReference type="GO" id="GO:0015935">
    <property type="term" value="C:small ribosomal subunit"/>
    <property type="evidence" value="ECO:0007669"/>
    <property type="project" value="TreeGrafter"/>
</dbReference>
<dbReference type="GO" id="GO:0003735">
    <property type="term" value="F:structural constituent of ribosome"/>
    <property type="evidence" value="ECO:0007669"/>
    <property type="project" value="InterPro"/>
</dbReference>
<dbReference type="GO" id="GO:0032543">
    <property type="term" value="P:mitochondrial translation"/>
    <property type="evidence" value="ECO:0007669"/>
    <property type="project" value="TreeGrafter"/>
</dbReference>
<dbReference type="Gene3D" id="3.30.1320.10">
    <property type="match status" value="1"/>
</dbReference>
<dbReference type="HAMAP" id="MF_00385">
    <property type="entry name" value="Ribosomal_bS16"/>
    <property type="match status" value="1"/>
</dbReference>
<dbReference type="InterPro" id="IPR000307">
    <property type="entry name" value="Ribosomal_bS16"/>
</dbReference>
<dbReference type="InterPro" id="IPR020592">
    <property type="entry name" value="Ribosomal_bS16_CS"/>
</dbReference>
<dbReference type="InterPro" id="IPR023803">
    <property type="entry name" value="Ribosomal_bS16_dom_sf"/>
</dbReference>
<dbReference type="NCBIfam" id="TIGR00002">
    <property type="entry name" value="S16"/>
    <property type="match status" value="1"/>
</dbReference>
<dbReference type="PANTHER" id="PTHR12919">
    <property type="entry name" value="30S RIBOSOMAL PROTEIN S16"/>
    <property type="match status" value="1"/>
</dbReference>
<dbReference type="PANTHER" id="PTHR12919:SF20">
    <property type="entry name" value="SMALL RIBOSOMAL SUBUNIT PROTEIN BS16M"/>
    <property type="match status" value="1"/>
</dbReference>
<dbReference type="Pfam" id="PF00886">
    <property type="entry name" value="Ribosomal_S16"/>
    <property type="match status" value="1"/>
</dbReference>
<dbReference type="SUPFAM" id="SSF54565">
    <property type="entry name" value="Ribosomal protein S16"/>
    <property type="match status" value="1"/>
</dbReference>
<dbReference type="PROSITE" id="PS00732">
    <property type="entry name" value="RIBOSOMAL_S16"/>
    <property type="match status" value="1"/>
</dbReference>
<reference key="1">
    <citation type="journal article" date="2006" name="Mol. Biol. Evol.">
        <title>The chloroplast genome sequence of Chara vulgaris sheds new light into the closest green algal relatives of land plants.</title>
        <authorList>
            <person name="Turmel M."/>
            <person name="Otis C."/>
            <person name="Lemieux C."/>
        </authorList>
    </citation>
    <scope>NUCLEOTIDE SEQUENCE [LARGE SCALE GENOMIC DNA]</scope>
</reference>
<geneLocation type="chloroplast"/>
<accession>Q1ACL1</accession>
<proteinExistence type="inferred from homology"/>
<sequence>MVKLRLKRYGKKQQPTYRIVAIESSFRREGRAFKEVGIYIPKYNKTQLNVPAIIELLKNGAQPTSTVKNILLRAQIVV</sequence>
<name>RR16_CHAVU</name>
<protein>
    <recommendedName>
        <fullName evidence="1">Small ribosomal subunit protein bS16c</fullName>
    </recommendedName>
    <alternativeName>
        <fullName evidence="2">30S ribosomal protein S16, chloroplastic</fullName>
    </alternativeName>
</protein>